<comment type="function">
    <text evidence="1">Transaldolase is important for the balance of metabolites in the pentose-phosphate pathway.</text>
</comment>
<comment type="catalytic activity">
    <reaction evidence="1">
        <text>D-sedoheptulose 7-phosphate + D-glyceraldehyde 3-phosphate = D-erythrose 4-phosphate + beta-D-fructose 6-phosphate</text>
        <dbReference type="Rhea" id="RHEA:17053"/>
        <dbReference type="ChEBI" id="CHEBI:16897"/>
        <dbReference type="ChEBI" id="CHEBI:57483"/>
        <dbReference type="ChEBI" id="CHEBI:57634"/>
        <dbReference type="ChEBI" id="CHEBI:59776"/>
        <dbReference type="EC" id="2.2.1.2"/>
    </reaction>
</comment>
<comment type="pathway">
    <text evidence="1">Carbohydrate degradation; pentose phosphate pathway; D-glyceraldehyde 3-phosphate and beta-D-fructose 6-phosphate from D-ribose 5-phosphate and D-xylulose 5-phosphate (non-oxidative stage): step 2/3.</text>
</comment>
<comment type="subcellular location">
    <subcellularLocation>
        <location evidence="1">Cytoplasm</location>
    </subcellularLocation>
</comment>
<comment type="similarity">
    <text evidence="1">Belongs to the transaldolase family. Type 3B subfamily.</text>
</comment>
<feature type="chain" id="PRO_1000126369" description="Probable transaldolase">
    <location>
        <begin position="1"/>
        <end position="223"/>
    </location>
</feature>
<feature type="active site" description="Schiff-base intermediate with substrate" evidence="1">
    <location>
        <position position="92"/>
    </location>
</feature>
<name>TAL_THET2</name>
<accession>Q72JR7</accession>
<proteinExistence type="inferred from homology"/>
<organism>
    <name type="scientific">Thermus thermophilus (strain ATCC BAA-163 / DSM 7039 / HB27)</name>
    <dbReference type="NCBI Taxonomy" id="262724"/>
    <lineage>
        <taxon>Bacteria</taxon>
        <taxon>Thermotogati</taxon>
        <taxon>Deinococcota</taxon>
        <taxon>Deinococci</taxon>
        <taxon>Thermales</taxon>
        <taxon>Thermaceae</taxon>
        <taxon>Thermus</taxon>
    </lineage>
</organism>
<evidence type="ECO:0000255" key="1">
    <source>
        <dbReference type="HAMAP-Rule" id="MF_00494"/>
    </source>
</evidence>
<keyword id="KW-0963">Cytoplasm</keyword>
<keyword id="KW-0570">Pentose shunt</keyword>
<keyword id="KW-0704">Schiff base</keyword>
<keyword id="KW-0808">Transferase</keyword>
<gene>
    <name evidence="1" type="primary">tal</name>
    <name type="ordered locus">TT_C0701</name>
</gene>
<protein>
    <recommendedName>
        <fullName evidence="1">Probable transaldolase</fullName>
        <ecNumber evidence="1">2.2.1.2</ecNumber>
    </recommendedName>
</protein>
<sequence length="223" mass="24093">MELYLDTASLEEIREIAAWGVLSGVTTNPTLVAKVFAAKGEALTEEAFAAHLRAICETVGGPVSAEVTALEAEAMVAEGRRLAAIHPQIVVKLPTTEEGLKACKRLSAEGIRVNMTLIFSANQALLAARAGASYVSPFLGRVDDISWDGGELLREIVEMIQVQDLPVKVIAASIRHPRHVTEAALLGADIATMPHAVFKQLLKHPLTDIGLKRFLEDWEKVKP</sequence>
<dbReference type="EC" id="2.2.1.2" evidence="1"/>
<dbReference type="EMBL" id="AE017221">
    <property type="protein sequence ID" value="AAS81049.1"/>
    <property type="molecule type" value="Genomic_DNA"/>
</dbReference>
<dbReference type="RefSeq" id="WP_011173143.1">
    <property type="nucleotide sequence ID" value="NC_005835.1"/>
</dbReference>
<dbReference type="SMR" id="Q72JR7"/>
<dbReference type="KEGG" id="tth:TT_C0701"/>
<dbReference type="eggNOG" id="COG0176">
    <property type="taxonomic scope" value="Bacteria"/>
</dbReference>
<dbReference type="HOGENOM" id="CLU_079764_0_0_0"/>
<dbReference type="OrthoDB" id="9807051at2"/>
<dbReference type="UniPathway" id="UPA00115">
    <property type="reaction ID" value="UER00414"/>
</dbReference>
<dbReference type="Proteomes" id="UP000000592">
    <property type="component" value="Chromosome"/>
</dbReference>
<dbReference type="GO" id="GO:0005737">
    <property type="term" value="C:cytoplasm"/>
    <property type="evidence" value="ECO:0007669"/>
    <property type="project" value="UniProtKB-SubCell"/>
</dbReference>
<dbReference type="GO" id="GO:0016832">
    <property type="term" value="F:aldehyde-lyase activity"/>
    <property type="evidence" value="ECO:0007669"/>
    <property type="project" value="InterPro"/>
</dbReference>
<dbReference type="GO" id="GO:0004801">
    <property type="term" value="F:transaldolase activity"/>
    <property type="evidence" value="ECO:0007669"/>
    <property type="project" value="UniProtKB-UniRule"/>
</dbReference>
<dbReference type="GO" id="GO:0005975">
    <property type="term" value="P:carbohydrate metabolic process"/>
    <property type="evidence" value="ECO:0007669"/>
    <property type="project" value="InterPro"/>
</dbReference>
<dbReference type="GO" id="GO:0006098">
    <property type="term" value="P:pentose-phosphate shunt"/>
    <property type="evidence" value="ECO:0007669"/>
    <property type="project" value="UniProtKB-UniRule"/>
</dbReference>
<dbReference type="CDD" id="cd00956">
    <property type="entry name" value="Transaldolase_FSA"/>
    <property type="match status" value="1"/>
</dbReference>
<dbReference type="FunFam" id="3.20.20.70:FF:000018">
    <property type="entry name" value="Probable transaldolase"/>
    <property type="match status" value="1"/>
</dbReference>
<dbReference type="Gene3D" id="3.20.20.70">
    <property type="entry name" value="Aldolase class I"/>
    <property type="match status" value="1"/>
</dbReference>
<dbReference type="HAMAP" id="MF_00494">
    <property type="entry name" value="Transaldolase_3b"/>
    <property type="match status" value="1"/>
</dbReference>
<dbReference type="InterPro" id="IPR013785">
    <property type="entry name" value="Aldolase_TIM"/>
</dbReference>
<dbReference type="InterPro" id="IPR001585">
    <property type="entry name" value="TAL/FSA"/>
</dbReference>
<dbReference type="InterPro" id="IPR022999">
    <property type="entry name" value="Transaldolase_3B"/>
</dbReference>
<dbReference type="InterPro" id="IPR004731">
    <property type="entry name" value="Transaldolase_3B/F6P_aldolase"/>
</dbReference>
<dbReference type="InterPro" id="IPR018225">
    <property type="entry name" value="Transaldolase_AS"/>
</dbReference>
<dbReference type="InterPro" id="IPR033919">
    <property type="entry name" value="TSA/FSA_arc/bac"/>
</dbReference>
<dbReference type="NCBIfam" id="TIGR00875">
    <property type="entry name" value="fsa_talC_mipB"/>
    <property type="match status" value="1"/>
</dbReference>
<dbReference type="PANTHER" id="PTHR10683:SF40">
    <property type="entry name" value="FRUCTOSE-6-PHOSPHATE ALDOLASE 1-RELATED"/>
    <property type="match status" value="1"/>
</dbReference>
<dbReference type="PANTHER" id="PTHR10683">
    <property type="entry name" value="TRANSALDOLASE"/>
    <property type="match status" value="1"/>
</dbReference>
<dbReference type="Pfam" id="PF00923">
    <property type="entry name" value="TAL_FSA"/>
    <property type="match status" value="1"/>
</dbReference>
<dbReference type="SUPFAM" id="SSF51569">
    <property type="entry name" value="Aldolase"/>
    <property type="match status" value="1"/>
</dbReference>
<dbReference type="PROSITE" id="PS01054">
    <property type="entry name" value="TRANSALDOLASE_1"/>
    <property type="match status" value="1"/>
</dbReference>
<dbReference type="PROSITE" id="PS00958">
    <property type="entry name" value="TRANSALDOLASE_2"/>
    <property type="match status" value="1"/>
</dbReference>
<reference key="1">
    <citation type="journal article" date="2004" name="Nat. Biotechnol.">
        <title>The genome sequence of the extreme thermophile Thermus thermophilus.</title>
        <authorList>
            <person name="Henne A."/>
            <person name="Brueggemann H."/>
            <person name="Raasch C."/>
            <person name="Wiezer A."/>
            <person name="Hartsch T."/>
            <person name="Liesegang H."/>
            <person name="Johann A."/>
            <person name="Lienard T."/>
            <person name="Gohl O."/>
            <person name="Martinez-Arias R."/>
            <person name="Jacobi C."/>
            <person name="Starkuviene V."/>
            <person name="Schlenczeck S."/>
            <person name="Dencker S."/>
            <person name="Huber R."/>
            <person name="Klenk H.-P."/>
            <person name="Kramer W."/>
            <person name="Merkl R."/>
            <person name="Gottschalk G."/>
            <person name="Fritz H.-J."/>
        </authorList>
    </citation>
    <scope>NUCLEOTIDE SEQUENCE [LARGE SCALE GENOMIC DNA]</scope>
    <source>
        <strain>ATCC BAA-163 / DSM 7039 / HB27</strain>
    </source>
</reference>